<keyword id="KW-0968">Cytoplasmic vesicle</keyword>
<keyword id="KW-0256">Endoplasmic reticulum</keyword>
<keyword id="KW-0931">ER-Golgi transport</keyword>
<keyword id="KW-0472">Membrane</keyword>
<keyword id="KW-0653">Protein transport</keyword>
<keyword id="KW-1185">Reference proteome</keyword>
<keyword id="KW-0677">Repeat</keyword>
<keyword id="KW-0813">Transport</keyword>
<keyword id="KW-0853">WD repeat</keyword>
<evidence type="ECO:0000250" key="1"/>
<evidence type="ECO:0000255" key="2">
    <source>
        <dbReference type="PROSITE-ProRule" id="PRU00221"/>
    </source>
</evidence>
<evidence type="ECO:0000256" key="3">
    <source>
        <dbReference type="SAM" id="MobiDB-lite"/>
    </source>
</evidence>
<evidence type="ECO:0000305" key="4"/>
<dbReference type="EMBL" id="CH476595">
    <property type="protein sequence ID" value="EAU38022.1"/>
    <property type="molecule type" value="Genomic_DNA"/>
</dbReference>
<dbReference type="RefSeq" id="XP_001208630.1">
    <property type="nucleotide sequence ID" value="XM_001208630.1"/>
</dbReference>
<dbReference type="SMR" id="Q0CYG9"/>
<dbReference type="STRING" id="341663.Q0CYG9"/>
<dbReference type="EnsemblFungi" id="EAU38022">
    <property type="protein sequence ID" value="EAU38022"/>
    <property type="gene ID" value="ATEG_01265"/>
</dbReference>
<dbReference type="GeneID" id="4315901"/>
<dbReference type="VEuPathDB" id="FungiDB:ATEG_01265"/>
<dbReference type="eggNOG" id="KOG0307">
    <property type="taxonomic scope" value="Eukaryota"/>
</dbReference>
<dbReference type="HOGENOM" id="CLU_003033_2_0_1"/>
<dbReference type="OMA" id="WLERPCG"/>
<dbReference type="OrthoDB" id="542917at2759"/>
<dbReference type="Proteomes" id="UP000007963">
    <property type="component" value="Unassembled WGS sequence"/>
</dbReference>
<dbReference type="GO" id="GO:0030127">
    <property type="term" value="C:COPII vesicle coat"/>
    <property type="evidence" value="ECO:0007669"/>
    <property type="project" value="TreeGrafter"/>
</dbReference>
<dbReference type="GO" id="GO:0070971">
    <property type="term" value="C:endoplasmic reticulum exit site"/>
    <property type="evidence" value="ECO:0007669"/>
    <property type="project" value="TreeGrafter"/>
</dbReference>
<dbReference type="GO" id="GO:0005789">
    <property type="term" value="C:endoplasmic reticulum membrane"/>
    <property type="evidence" value="ECO:0007669"/>
    <property type="project" value="UniProtKB-SubCell"/>
</dbReference>
<dbReference type="GO" id="GO:0005198">
    <property type="term" value="F:structural molecule activity"/>
    <property type="evidence" value="ECO:0007669"/>
    <property type="project" value="TreeGrafter"/>
</dbReference>
<dbReference type="GO" id="GO:0090110">
    <property type="term" value="P:COPII-coated vesicle cargo loading"/>
    <property type="evidence" value="ECO:0007669"/>
    <property type="project" value="TreeGrafter"/>
</dbReference>
<dbReference type="GO" id="GO:0007029">
    <property type="term" value="P:endoplasmic reticulum organization"/>
    <property type="evidence" value="ECO:0007669"/>
    <property type="project" value="TreeGrafter"/>
</dbReference>
<dbReference type="GO" id="GO:0015031">
    <property type="term" value="P:protein transport"/>
    <property type="evidence" value="ECO:0007669"/>
    <property type="project" value="UniProtKB-KW"/>
</dbReference>
<dbReference type="FunFam" id="1.20.940.10:FF:000007">
    <property type="entry name" value="Protein transport protein (SEC31), putative"/>
    <property type="match status" value="1"/>
</dbReference>
<dbReference type="FunFam" id="2.130.10.10:FF:000193">
    <property type="entry name" value="Protein transport protein SEC31, putative"/>
    <property type="match status" value="1"/>
</dbReference>
<dbReference type="Gene3D" id="1.25.40.1030">
    <property type="match status" value="1"/>
</dbReference>
<dbReference type="Gene3D" id="1.20.940.10">
    <property type="entry name" value="Functional domain of the splicing factor Prp18"/>
    <property type="match status" value="1"/>
</dbReference>
<dbReference type="Gene3D" id="2.130.10.10">
    <property type="entry name" value="YVTN repeat-like/Quinoprotein amine dehydrogenase"/>
    <property type="match status" value="1"/>
</dbReference>
<dbReference type="InterPro" id="IPR040251">
    <property type="entry name" value="SEC31-like"/>
</dbReference>
<dbReference type="InterPro" id="IPR009917">
    <property type="entry name" value="SRA1/Sec31"/>
</dbReference>
<dbReference type="InterPro" id="IPR015943">
    <property type="entry name" value="WD40/YVTN_repeat-like_dom_sf"/>
</dbReference>
<dbReference type="InterPro" id="IPR036322">
    <property type="entry name" value="WD40_repeat_dom_sf"/>
</dbReference>
<dbReference type="InterPro" id="IPR001680">
    <property type="entry name" value="WD40_rpt"/>
</dbReference>
<dbReference type="PANTHER" id="PTHR13923">
    <property type="entry name" value="SEC31-RELATED PROTEIN"/>
    <property type="match status" value="1"/>
</dbReference>
<dbReference type="PANTHER" id="PTHR13923:SF11">
    <property type="entry name" value="SECRETORY 31, ISOFORM D"/>
    <property type="match status" value="1"/>
</dbReference>
<dbReference type="Pfam" id="PF07304">
    <property type="entry name" value="SRA1"/>
    <property type="match status" value="1"/>
</dbReference>
<dbReference type="Pfam" id="PF00400">
    <property type="entry name" value="WD40"/>
    <property type="match status" value="1"/>
</dbReference>
<dbReference type="SMART" id="SM00320">
    <property type="entry name" value="WD40"/>
    <property type="match status" value="6"/>
</dbReference>
<dbReference type="SUPFAM" id="SSF50978">
    <property type="entry name" value="WD40 repeat-like"/>
    <property type="match status" value="1"/>
</dbReference>
<dbReference type="PROSITE" id="PS50082">
    <property type="entry name" value="WD_REPEATS_2"/>
    <property type="match status" value="2"/>
</dbReference>
<dbReference type="PROSITE" id="PS50294">
    <property type="entry name" value="WD_REPEATS_REGION"/>
    <property type="match status" value="1"/>
</dbReference>
<accession>Q0CYG9</accession>
<organism>
    <name type="scientific">Aspergillus terreus (strain NIH 2624 / FGSC A1156)</name>
    <dbReference type="NCBI Taxonomy" id="341663"/>
    <lineage>
        <taxon>Eukaryota</taxon>
        <taxon>Fungi</taxon>
        <taxon>Dikarya</taxon>
        <taxon>Ascomycota</taxon>
        <taxon>Pezizomycotina</taxon>
        <taxon>Eurotiomycetes</taxon>
        <taxon>Eurotiomycetidae</taxon>
        <taxon>Eurotiales</taxon>
        <taxon>Aspergillaceae</taxon>
        <taxon>Aspergillus</taxon>
        <taxon>Aspergillus subgen. Circumdati</taxon>
    </lineage>
</organism>
<comment type="function">
    <text evidence="1">Component of the coat protein complex II (COPII) which promotes the formation of transport vesicles from the endoplasmic reticulum (ER). The coat has two main functions, the physical deformation of the endoplasmic reticulum membrane into vesicles and the selection of cargo molecules (By similarity).</text>
</comment>
<comment type="subunit">
    <text evidence="1">The COPII coat is composed of at least 5 proteins: the sec23/24 complex, the sec13/31 complex, and the protein sar1. sec13 and sec31 make a 2:2 tetramer that forms the edge element of the COPII outer coat. The tetramer self-assembles in multiple copies to form the complete polyhedral cage. Interacts (via WD 8) with sec13 (By similarity).</text>
</comment>
<comment type="subcellular location">
    <subcellularLocation>
        <location evidence="1">Cytoplasmic vesicle</location>
        <location evidence="1">COPII-coated vesicle membrane</location>
        <topology evidence="1">Peripheral membrane protein</topology>
        <orientation evidence="1">Cytoplasmic side</orientation>
    </subcellularLocation>
    <subcellularLocation>
        <location evidence="1">Endoplasmic reticulum membrane</location>
        <topology evidence="1">Peripheral membrane protein</topology>
        <orientation evidence="1">Cytoplasmic side</orientation>
    </subcellularLocation>
</comment>
<comment type="similarity">
    <text evidence="4">Belongs to the WD repeat SEC31 family.</text>
</comment>
<reference key="1">
    <citation type="submission" date="2005-09" db="EMBL/GenBank/DDBJ databases">
        <title>Annotation of the Aspergillus terreus NIH2624 genome.</title>
        <authorList>
            <person name="Birren B.W."/>
            <person name="Lander E.S."/>
            <person name="Galagan J.E."/>
            <person name="Nusbaum C."/>
            <person name="Devon K."/>
            <person name="Henn M."/>
            <person name="Ma L.-J."/>
            <person name="Jaffe D.B."/>
            <person name="Butler J."/>
            <person name="Alvarez P."/>
            <person name="Gnerre S."/>
            <person name="Grabherr M."/>
            <person name="Kleber M."/>
            <person name="Mauceli E.W."/>
            <person name="Brockman W."/>
            <person name="Rounsley S."/>
            <person name="Young S.K."/>
            <person name="LaButti K."/>
            <person name="Pushparaj V."/>
            <person name="DeCaprio D."/>
            <person name="Crawford M."/>
            <person name="Koehrsen M."/>
            <person name="Engels R."/>
            <person name="Montgomery P."/>
            <person name="Pearson M."/>
            <person name="Howarth C."/>
            <person name="Larson L."/>
            <person name="Luoma S."/>
            <person name="White J."/>
            <person name="Alvarado L."/>
            <person name="Kodira C.D."/>
            <person name="Zeng Q."/>
            <person name="Oleary S."/>
            <person name="Yandava C."/>
            <person name="Denning D.W."/>
            <person name="Nierman W.C."/>
            <person name="Milne T."/>
            <person name="Madden K."/>
        </authorList>
    </citation>
    <scope>NUCLEOTIDE SEQUENCE [LARGE SCALE GENOMIC DNA]</scope>
    <source>
        <strain>NIH 2624 / FGSC A1156</strain>
    </source>
</reference>
<sequence length="1247" mass="134483">MVRLREIPRTATFAWSPGADSPLIATGTRAGAVDVDFSNETCLELWDLGLSREDVSGELQPAAKIDTDSGFNDIAWTESDDNKRGVIAGALENGSLDLWDADKLLNGSSDSVISRSTKHSGAIKALQFNPKHSNLLATGGAKGELYISDLNNVANPYRLGTAARADDIECLDWNKKVAHILVTGSNAGFVTVWDVKSKKESLTLNNVGRKAVSAVAWDPEKPTRLVTATPLESDPMICVWDLRNSHAPERTLRGHESGVLSLSWCTQDPDLLLSSGKDNRTLCWNPQTGYAYGEFPVVTNWTFQTRWNPHNPNFFATASFDGRISIQTIQNTSTDTAKAIADQNQALDGEDFFAKAQSQPQVSSFSLPKAPKWLERPCGATFGFGGRVVSVGLTEKGSRTSTIKITPFEVDEAVGKSTETFENALKEGDLRSICETRATNAATEEEKADWKVIEALISENPRKSLVDYLGFQDKADEAADSLAKLGLGKDEDVNGEPAKESRGPGAKKHKRLQSMFDANPEGDSFLSDLAASKGAKTNNPFQIFNGSESEAEKGITRALLVGDFEKALDVALKEDRMSDAFMIAICGGQKCIEKAQEHYFSKQTDSPNYVRLLASIVGKNLWDVVHNADLSNWKEVMAALCTFAEEKEFADLCEALGDRLEEQVRSSDEKSARKDASFCFLAGSKLEKVVAIWIEELAENEQKAIETGANDTTFSIHVHALQSLIEKVTIFRQVSKFQDTEHTKDSDWKLGMLYDKYIEYADVVATHGRLQVAQKYLDLVPEKHPEAEIARNRIKLAMRQAAPQRTQTTAPATRATRTPMGRPMPQPSAYQPQSTFAPAAPAAPNTYAPPTAAPNPYAPAAPAAAAPAPPQPVNPLLPHRRMAVFLLLLRANNQSPATVTTYTTATNLPAWNDLPEGFMKPPTSRRATPATAAAPITSPFPNQSPPIGHGPPPPGAPPTQRTPSVPPPPKGTAPPPRMSSPLAGAPPMASMAPPPAAAPAPAPPANPYATLPQSPPMASSMAPPASIPRGPSPYNAPPTAPPPSNRYAPSPAAQAASPQLQTRAPVPPPPQAAASPYAPQPMAQPPAANPYAPSTPPMVAPPMQQGPPPPQAGGSRPSTANSQRKAAPPPPKYPPGDRSHIPAEAMPVFEILSADMQRVKSRAPSSFKAQVDDAERRLNILFDHLNNEDLLKPNTIADMAELARAIQARDYDTARAIHVDIMTNRMDECGQWMVGVKRLISMSRATP</sequence>
<proteinExistence type="inferred from homology"/>
<feature type="chain" id="PRO_0000295431" description="Protein transport protein sec31">
    <location>
        <begin position="1"/>
        <end position="1247"/>
    </location>
</feature>
<feature type="repeat" description="WD 1">
    <location>
        <begin position="5"/>
        <end position="47"/>
    </location>
</feature>
<feature type="repeat" description="WD 2">
    <location>
        <begin position="66"/>
        <end position="109"/>
    </location>
</feature>
<feature type="repeat" description="WD 3">
    <location>
        <begin position="118"/>
        <end position="158"/>
    </location>
</feature>
<feature type="repeat" description="WD 4">
    <location>
        <begin position="163"/>
        <end position="203"/>
    </location>
</feature>
<feature type="repeat" description="WD 5">
    <location>
        <begin position="207"/>
        <end position="250"/>
    </location>
</feature>
<feature type="repeat" description="WD 6">
    <location>
        <begin position="254"/>
        <end position="294"/>
    </location>
</feature>
<feature type="repeat" description="WD 7">
    <location>
        <begin position="297"/>
        <end position="337"/>
    </location>
</feature>
<feature type="repeat" description="WD 8; interaction with sec13" evidence="2">
    <location>
        <begin position="381"/>
        <end position="406"/>
    </location>
</feature>
<feature type="region of interest" description="Disordered" evidence="3">
    <location>
        <begin position="487"/>
        <end position="509"/>
    </location>
</feature>
<feature type="region of interest" description="Disordered" evidence="3">
    <location>
        <begin position="798"/>
        <end position="854"/>
    </location>
</feature>
<feature type="region of interest" description="Disordered" evidence="3">
    <location>
        <begin position="908"/>
        <end position="1141"/>
    </location>
</feature>
<feature type="compositionally biased region" description="Basic and acidic residues" evidence="3">
    <location>
        <begin position="487"/>
        <end position="502"/>
    </location>
</feature>
<feature type="compositionally biased region" description="Low complexity" evidence="3">
    <location>
        <begin position="798"/>
        <end position="823"/>
    </location>
</feature>
<feature type="compositionally biased region" description="Low complexity" evidence="3">
    <location>
        <begin position="837"/>
        <end position="850"/>
    </location>
</feature>
<feature type="compositionally biased region" description="Low complexity" evidence="3">
    <location>
        <begin position="921"/>
        <end position="939"/>
    </location>
</feature>
<feature type="compositionally biased region" description="Pro residues" evidence="3">
    <location>
        <begin position="942"/>
        <end position="957"/>
    </location>
</feature>
<feature type="compositionally biased region" description="Pro residues" evidence="3">
    <location>
        <begin position="964"/>
        <end position="978"/>
    </location>
</feature>
<feature type="compositionally biased region" description="Low complexity" evidence="3">
    <location>
        <begin position="979"/>
        <end position="991"/>
    </location>
</feature>
<feature type="compositionally biased region" description="Pro residues" evidence="3">
    <location>
        <begin position="992"/>
        <end position="1006"/>
    </location>
</feature>
<feature type="compositionally biased region" description="Pro residues" evidence="3">
    <location>
        <begin position="1030"/>
        <end position="1044"/>
    </location>
</feature>
<feature type="compositionally biased region" description="Low complexity" evidence="3">
    <location>
        <begin position="1045"/>
        <end position="1064"/>
    </location>
</feature>
<feature type="compositionally biased region" description="Pro residues" evidence="3">
    <location>
        <begin position="1078"/>
        <end position="1111"/>
    </location>
</feature>
<gene>
    <name type="primary">sec31</name>
    <name type="ORF">ATEG_01265</name>
</gene>
<protein>
    <recommendedName>
        <fullName>Protein transport protein sec31</fullName>
    </recommendedName>
</protein>
<name>SEC31_ASPTN</name>